<evidence type="ECO:0000256" key="1">
    <source>
        <dbReference type="SAM" id="MobiDB-lite"/>
    </source>
</evidence>
<evidence type="ECO:0000269" key="2">
    <source>
    </source>
</evidence>
<evidence type="ECO:0000303" key="3">
    <source>
    </source>
</evidence>
<evidence type="ECO:0000305" key="4"/>
<evidence type="ECO:0000305" key="5">
    <source>
    </source>
</evidence>
<evidence type="ECO:0000312" key="6">
    <source>
        <dbReference type="EMBL" id="EFG03980.2"/>
    </source>
</evidence>
<evidence type="ECO:0000312" key="7">
    <source>
        <dbReference type="Proteomes" id="UP000002357"/>
    </source>
</evidence>
<gene>
    <name evidence="6" type="ORF">SCLAV_p0490</name>
</gene>
<sequence length="545" mass="58120">MPVDVGTLPPPAPREAVSAAAHLLASVDGDPWGRTSPTVYETARVHAWAPHLPGRDRRVTWLLDQQRAGGLWGDGPPAYQVLPTLAAVTALLAELDRHPEAGHSSLGGRLAAAVAAGLDTLHGLSHHDPLPDTAAVELLVPGLITEVNDRLDAIDPEAAHPALAPVPHGRRLTAVHGIPALPRHRLAERLARFARLPVKLHHCFEALAPVCPPGLVPARPDHLLGSSSAATAAWLATATAAPGAPGLDRLLRSTAARYGGLFPETARITVFERLWVLTTLHRAGLLATFEPLARRWVSALAAPGGVPGVPGFEPDADDTAVTLHLATELGVPYRPEVLDPFRTGDHFACYLGEDTGSVSTNAHVLLALGTWTRHHPDTADHGNTIRLLGRWLVERQHGDGHWDDKWHASPYYATAKVTAALSRHGGPEAADALRRAARWVRETRRTDGSWGIWGGTAEETAYAAQILLDAPEPPTDVLGCAHAHLTARADDDGPPPALWHDKTLFAPDAIVRAEVLSTLRRLDRRLPAPAPVPPGFDAARTGPAD</sequence>
<organism>
    <name type="scientific">Streptomyces clavuligerus</name>
    <dbReference type="NCBI Taxonomy" id="1901"/>
    <lineage>
        <taxon>Bacteria</taxon>
        <taxon>Bacillati</taxon>
        <taxon>Actinomycetota</taxon>
        <taxon>Actinomycetes</taxon>
        <taxon>Kitasatosporales</taxon>
        <taxon>Streptomycetaceae</taxon>
        <taxon>Streptomyces</taxon>
    </lineage>
</organism>
<name>LADIS_STRCL</name>
<comment type="function">
    <text evidence="2">Involved in the biosynthesis of the labdane-type bicyclic diterpene labda-7,13(16),14-triene. Catalyzes the conversion of geranylgeranyl diphosphate (GGDP) into labda-7,13(E)-dienyl diphosphate.</text>
</comment>
<comment type="catalytic activity">
    <reaction evidence="5">
        <text>(2E,6E,10E)-geranylgeranyl diphosphate = (13E)-labda-7,13-dien-15-yl diphosphate</text>
        <dbReference type="Rhea" id="RHEA:54692"/>
        <dbReference type="ChEBI" id="CHEBI:58756"/>
        <dbReference type="ChEBI" id="CHEBI:63682"/>
        <dbReference type="EC" id="5.5.1.30"/>
    </reaction>
</comment>
<comment type="cofactor">
    <cofactor evidence="5">
        <name>Mg(2+)</name>
        <dbReference type="ChEBI" id="CHEBI:18420"/>
    </cofactor>
</comment>
<comment type="domain">
    <text evidence="5">The Asp-Xaa-Asp-Asp-Thr-Ala (DXDDTA) and Arg-Xaa-Xaa-Asp-Gly-Ser-Trp (RXXDGSW) motifs are expected to bind to Mg(2+).</text>
</comment>
<comment type="similarity">
    <text evidence="4">Belongs to the terpene synthase family.</text>
</comment>
<feature type="chain" id="PRO_0000444809" description="Labda-7,13-dienyl diphosphate synthase">
    <location>
        <begin position="1"/>
        <end position="545"/>
    </location>
</feature>
<feature type="region of interest" description="Disordered" evidence="1">
    <location>
        <begin position="526"/>
        <end position="545"/>
    </location>
</feature>
<feature type="short sequence motif" description="DXDDTA motif" evidence="5">
    <location>
        <begin position="315"/>
        <end position="320"/>
    </location>
</feature>
<feature type="short sequence motif" description="RXXDGSW motif" evidence="5">
    <location>
        <begin position="444"/>
        <end position="450"/>
    </location>
</feature>
<accession>D5SJ87</accession>
<geneLocation type="plasmid" evidence="6 7">
    <name>pSCL4</name>
</geneLocation>
<dbReference type="EC" id="5.5.1.30" evidence="5"/>
<dbReference type="EMBL" id="CM000914">
    <property type="protein sequence ID" value="EFG03980.2"/>
    <property type="molecule type" value="Genomic_DNA"/>
</dbReference>
<dbReference type="RefSeq" id="WP_003963126.1">
    <property type="nucleotide sequence ID" value="NZ_CM000914.1"/>
</dbReference>
<dbReference type="SMR" id="D5SJ87"/>
<dbReference type="GeneID" id="93733634"/>
<dbReference type="KEGG" id="ag:EFG03980"/>
<dbReference type="eggNOG" id="COG1657">
    <property type="taxonomic scope" value="Bacteria"/>
</dbReference>
<dbReference type="OrthoDB" id="9758578at2"/>
<dbReference type="BRENDA" id="5.5.1.30">
    <property type="organism ID" value="5988"/>
</dbReference>
<dbReference type="Proteomes" id="UP000002357">
    <property type="component" value="Plasmid pSCL4"/>
</dbReference>
<dbReference type="GO" id="GO:0016853">
    <property type="term" value="F:isomerase activity"/>
    <property type="evidence" value="ECO:0007669"/>
    <property type="project" value="UniProtKB-KW"/>
</dbReference>
<dbReference type="GO" id="GO:0000287">
    <property type="term" value="F:magnesium ion binding"/>
    <property type="evidence" value="ECO:0007669"/>
    <property type="project" value="TreeGrafter"/>
</dbReference>
<dbReference type="GO" id="GO:0010333">
    <property type="term" value="F:terpene synthase activity"/>
    <property type="evidence" value="ECO:0007669"/>
    <property type="project" value="InterPro"/>
</dbReference>
<dbReference type="GO" id="GO:0016102">
    <property type="term" value="P:diterpenoid biosynthetic process"/>
    <property type="evidence" value="ECO:0007669"/>
    <property type="project" value="TreeGrafter"/>
</dbReference>
<dbReference type="Gene3D" id="1.50.10.160">
    <property type="match status" value="1"/>
</dbReference>
<dbReference type="Gene3D" id="1.50.10.20">
    <property type="match status" value="1"/>
</dbReference>
<dbReference type="InterPro" id="IPR032696">
    <property type="entry name" value="SQ_cyclase_C"/>
</dbReference>
<dbReference type="InterPro" id="IPR050148">
    <property type="entry name" value="Terpene_synthase-like"/>
</dbReference>
<dbReference type="InterPro" id="IPR008930">
    <property type="entry name" value="Terpenoid_cyclase/PrenylTrfase"/>
</dbReference>
<dbReference type="PANTHER" id="PTHR31739:SF25">
    <property type="entry name" value="(E,E)-GERANYLLINALOOL SYNTHASE"/>
    <property type="match status" value="1"/>
</dbReference>
<dbReference type="PANTHER" id="PTHR31739">
    <property type="entry name" value="ENT-COPALYL DIPHOSPHATE SYNTHASE, CHLOROPLASTIC"/>
    <property type="match status" value="1"/>
</dbReference>
<dbReference type="Pfam" id="PF13243">
    <property type="entry name" value="SQHop_cyclase_C"/>
    <property type="match status" value="1"/>
</dbReference>
<dbReference type="SUPFAM" id="SSF48239">
    <property type="entry name" value="Terpenoid cyclases/Protein prenyltransferases"/>
    <property type="match status" value="1"/>
</dbReference>
<proteinExistence type="evidence at protein level"/>
<keyword id="KW-0413">Isomerase</keyword>
<keyword id="KW-0460">Magnesium</keyword>
<keyword id="KW-0479">Metal-binding</keyword>
<keyword id="KW-0614">Plasmid</keyword>
<keyword id="KW-1185">Reference proteome</keyword>
<reference key="1">
    <citation type="journal article" date="2010" name="Genome Biol. Evol.">
        <title>The sequence of a 1.8-mb bacterial linear plasmid reveals a rich evolutionary reservoir of secondary metabolic pathways.</title>
        <authorList>
            <person name="Medema M.H."/>
            <person name="Trefzer A."/>
            <person name="Kovalchuk A."/>
            <person name="van den Berg M."/>
            <person name="Mueller U."/>
            <person name="Heijne W."/>
            <person name="Wu L."/>
            <person name="Alam M.T."/>
            <person name="Ronning C.M."/>
            <person name="Nierman W.C."/>
            <person name="Bovenberg R.A.L."/>
            <person name="Breitling R."/>
            <person name="Takano E."/>
        </authorList>
    </citation>
    <scope>NUCLEOTIDE SEQUENCE [LARGE SCALE GENOMIC DNA]</scope>
    <source>
        <strain evidence="7">ATCC 27064 / DSM 738 / JCM 4710 / NBRC 13307 / NCIMB 12785 / NRRL 3585 / VKM Ac-602</strain>
    </source>
</reference>
<reference key="2">
    <citation type="journal article" date="2016" name="J. Antibiot.">
        <title>Chemical diversity of labdane-type bicyclic diterpene biosynthesis in Actinomycetales microorganisms.</title>
        <authorList>
            <person name="Yamada Y."/>
            <person name="Komatsu M."/>
            <person name="Ikeda H."/>
        </authorList>
    </citation>
    <scope>FUNCTION</scope>
    <scope>CATALYTIC ACTIVITY</scope>
    <scope>COFACTOR</scope>
    <scope>DOMAIN</scope>
    <source>
        <strain>ATCC 27064 / DSM 738 / JCM 4710 / NBRC 13307 / NCIMB 12785 / NRRL 3585 / VKM Ac-602</strain>
    </source>
</reference>
<protein>
    <recommendedName>
        <fullName evidence="3">Labda-7,13-dienyl diphosphate synthase</fullName>
        <ecNumber evidence="5">5.5.1.30</ecNumber>
    </recommendedName>
    <alternativeName>
        <fullName evidence="3">Type-B diterpene synthase</fullName>
    </alternativeName>
</protein>